<feature type="chain" id="PRO_1000099477" description="UvrABC system protein C">
    <location>
        <begin position="1"/>
        <end position="610"/>
    </location>
</feature>
<feature type="domain" description="GIY-YIG" evidence="1">
    <location>
        <begin position="16"/>
        <end position="94"/>
    </location>
</feature>
<feature type="domain" description="UVR" evidence="1">
    <location>
        <begin position="204"/>
        <end position="239"/>
    </location>
</feature>
<organism>
    <name type="scientific">Escherichia coli O157:H7 (strain EC4115 / EHEC)</name>
    <dbReference type="NCBI Taxonomy" id="444450"/>
    <lineage>
        <taxon>Bacteria</taxon>
        <taxon>Pseudomonadati</taxon>
        <taxon>Pseudomonadota</taxon>
        <taxon>Gammaproteobacteria</taxon>
        <taxon>Enterobacterales</taxon>
        <taxon>Enterobacteriaceae</taxon>
        <taxon>Escherichia</taxon>
    </lineage>
</organism>
<reference key="1">
    <citation type="journal article" date="2011" name="Proc. Natl. Acad. Sci. U.S.A.">
        <title>Genomic anatomy of Escherichia coli O157:H7 outbreaks.</title>
        <authorList>
            <person name="Eppinger M."/>
            <person name="Mammel M.K."/>
            <person name="Leclerc J.E."/>
            <person name="Ravel J."/>
            <person name="Cebula T.A."/>
        </authorList>
    </citation>
    <scope>NUCLEOTIDE SEQUENCE [LARGE SCALE GENOMIC DNA]</scope>
    <source>
        <strain>EC4115 / EHEC</strain>
    </source>
</reference>
<evidence type="ECO:0000255" key="1">
    <source>
        <dbReference type="HAMAP-Rule" id="MF_00203"/>
    </source>
</evidence>
<proteinExistence type="inferred from homology"/>
<comment type="function">
    <text evidence="1">The UvrABC repair system catalyzes the recognition and processing of DNA lesions. UvrC both incises the 5' and 3' sides of the lesion. The N-terminal half is responsible for the 3' incision and the C-terminal half is responsible for the 5' incision.</text>
</comment>
<comment type="subunit">
    <text evidence="1">Interacts with UvrB in an incision complex.</text>
</comment>
<comment type="subcellular location">
    <subcellularLocation>
        <location evidence="1">Cytoplasm</location>
    </subcellularLocation>
</comment>
<comment type="similarity">
    <text evidence="1">Belongs to the UvrC family.</text>
</comment>
<dbReference type="EMBL" id="CP001164">
    <property type="protein sequence ID" value="ACI39773.1"/>
    <property type="molecule type" value="Genomic_DNA"/>
</dbReference>
<dbReference type="RefSeq" id="WP_001283421.1">
    <property type="nucleotide sequence ID" value="NC_011353.1"/>
</dbReference>
<dbReference type="SMR" id="B5YRT7"/>
<dbReference type="GeneID" id="93776218"/>
<dbReference type="KEGG" id="ecf:ECH74115_2685"/>
<dbReference type="HOGENOM" id="CLU_014841_3_0_6"/>
<dbReference type="GO" id="GO:0005737">
    <property type="term" value="C:cytoplasm"/>
    <property type="evidence" value="ECO:0007669"/>
    <property type="project" value="UniProtKB-SubCell"/>
</dbReference>
<dbReference type="GO" id="GO:0009380">
    <property type="term" value="C:excinuclease repair complex"/>
    <property type="evidence" value="ECO:0007669"/>
    <property type="project" value="InterPro"/>
</dbReference>
<dbReference type="GO" id="GO:0003677">
    <property type="term" value="F:DNA binding"/>
    <property type="evidence" value="ECO:0007669"/>
    <property type="project" value="UniProtKB-UniRule"/>
</dbReference>
<dbReference type="GO" id="GO:0009381">
    <property type="term" value="F:excinuclease ABC activity"/>
    <property type="evidence" value="ECO:0007669"/>
    <property type="project" value="UniProtKB-UniRule"/>
</dbReference>
<dbReference type="GO" id="GO:0006289">
    <property type="term" value="P:nucleotide-excision repair"/>
    <property type="evidence" value="ECO:0007669"/>
    <property type="project" value="UniProtKB-UniRule"/>
</dbReference>
<dbReference type="GO" id="GO:0009432">
    <property type="term" value="P:SOS response"/>
    <property type="evidence" value="ECO:0007669"/>
    <property type="project" value="UniProtKB-UniRule"/>
</dbReference>
<dbReference type="CDD" id="cd10434">
    <property type="entry name" value="GIY-YIG_UvrC_Cho"/>
    <property type="match status" value="1"/>
</dbReference>
<dbReference type="FunFam" id="1.10.150.20:FF:000005">
    <property type="entry name" value="UvrABC system protein C"/>
    <property type="match status" value="1"/>
</dbReference>
<dbReference type="FunFam" id="3.30.420.340:FF:000001">
    <property type="entry name" value="UvrABC system protein C"/>
    <property type="match status" value="1"/>
</dbReference>
<dbReference type="FunFam" id="3.40.1440.10:FF:000001">
    <property type="entry name" value="UvrABC system protein C"/>
    <property type="match status" value="1"/>
</dbReference>
<dbReference type="FunFam" id="4.10.860.10:FF:000002">
    <property type="entry name" value="UvrABC system protein C"/>
    <property type="match status" value="1"/>
</dbReference>
<dbReference type="Gene3D" id="1.10.150.20">
    <property type="entry name" value="5' to 3' exonuclease, C-terminal subdomain"/>
    <property type="match status" value="1"/>
</dbReference>
<dbReference type="Gene3D" id="3.40.1440.10">
    <property type="entry name" value="GIY-YIG endonuclease"/>
    <property type="match status" value="1"/>
</dbReference>
<dbReference type="Gene3D" id="4.10.860.10">
    <property type="entry name" value="UVR domain"/>
    <property type="match status" value="1"/>
</dbReference>
<dbReference type="Gene3D" id="3.30.420.340">
    <property type="entry name" value="UvrC, RNAse H endonuclease domain"/>
    <property type="match status" value="1"/>
</dbReference>
<dbReference type="HAMAP" id="MF_00203">
    <property type="entry name" value="UvrC"/>
    <property type="match status" value="1"/>
</dbReference>
<dbReference type="InterPro" id="IPR000305">
    <property type="entry name" value="GIY-YIG_endonuc"/>
</dbReference>
<dbReference type="InterPro" id="IPR035901">
    <property type="entry name" value="GIY-YIG_endonuc_sf"/>
</dbReference>
<dbReference type="InterPro" id="IPR047296">
    <property type="entry name" value="GIY-YIG_UvrC_Cho"/>
</dbReference>
<dbReference type="InterPro" id="IPR003583">
    <property type="entry name" value="Hlx-hairpin-Hlx_DNA-bd_motif"/>
</dbReference>
<dbReference type="InterPro" id="IPR010994">
    <property type="entry name" value="RuvA_2-like"/>
</dbReference>
<dbReference type="InterPro" id="IPR001943">
    <property type="entry name" value="UVR_dom"/>
</dbReference>
<dbReference type="InterPro" id="IPR036876">
    <property type="entry name" value="UVR_dom_sf"/>
</dbReference>
<dbReference type="InterPro" id="IPR050066">
    <property type="entry name" value="UvrABC_protein_C"/>
</dbReference>
<dbReference type="InterPro" id="IPR004791">
    <property type="entry name" value="UvrC"/>
</dbReference>
<dbReference type="InterPro" id="IPR001162">
    <property type="entry name" value="UvrC_RNase_H_dom"/>
</dbReference>
<dbReference type="InterPro" id="IPR038476">
    <property type="entry name" value="UvrC_RNase_H_dom_sf"/>
</dbReference>
<dbReference type="NCBIfam" id="NF001824">
    <property type="entry name" value="PRK00558.1-5"/>
    <property type="match status" value="1"/>
</dbReference>
<dbReference type="NCBIfam" id="TIGR00194">
    <property type="entry name" value="uvrC"/>
    <property type="match status" value="1"/>
</dbReference>
<dbReference type="PANTHER" id="PTHR30562:SF1">
    <property type="entry name" value="UVRABC SYSTEM PROTEIN C"/>
    <property type="match status" value="1"/>
</dbReference>
<dbReference type="PANTHER" id="PTHR30562">
    <property type="entry name" value="UVRC/OXIDOREDUCTASE"/>
    <property type="match status" value="1"/>
</dbReference>
<dbReference type="Pfam" id="PF01541">
    <property type="entry name" value="GIY-YIG"/>
    <property type="match status" value="1"/>
</dbReference>
<dbReference type="Pfam" id="PF14520">
    <property type="entry name" value="HHH_5"/>
    <property type="match status" value="1"/>
</dbReference>
<dbReference type="Pfam" id="PF02151">
    <property type="entry name" value="UVR"/>
    <property type="match status" value="1"/>
</dbReference>
<dbReference type="Pfam" id="PF22920">
    <property type="entry name" value="UvrC_RNaseH"/>
    <property type="match status" value="1"/>
</dbReference>
<dbReference type="Pfam" id="PF08459">
    <property type="entry name" value="UvrC_RNaseH_dom"/>
    <property type="match status" value="1"/>
</dbReference>
<dbReference type="SMART" id="SM00465">
    <property type="entry name" value="GIYc"/>
    <property type="match status" value="1"/>
</dbReference>
<dbReference type="SMART" id="SM00278">
    <property type="entry name" value="HhH1"/>
    <property type="match status" value="2"/>
</dbReference>
<dbReference type="SUPFAM" id="SSF46600">
    <property type="entry name" value="C-terminal UvrC-binding domain of UvrB"/>
    <property type="match status" value="1"/>
</dbReference>
<dbReference type="SUPFAM" id="SSF82771">
    <property type="entry name" value="GIY-YIG endonuclease"/>
    <property type="match status" value="1"/>
</dbReference>
<dbReference type="SUPFAM" id="SSF47781">
    <property type="entry name" value="RuvA domain 2-like"/>
    <property type="match status" value="1"/>
</dbReference>
<dbReference type="PROSITE" id="PS50164">
    <property type="entry name" value="GIY_YIG"/>
    <property type="match status" value="1"/>
</dbReference>
<dbReference type="PROSITE" id="PS50151">
    <property type="entry name" value="UVR"/>
    <property type="match status" value="1"/>
</dbReference>
<dbReference type="PROSITE" id="PS50165">
    <property type="entry name" value="UVRC"/>
    <property type="match status" value="1"/>
</dbReference>
<sequence>MSDQFDAKAFLKTVTSQPGVYRMYDAGGTVIYVGKAKDLKKRLSSYFRSNLASRKTEALVAQIQQIDVTVTHTETEALLLEHNYIKLYQPRYNVLLRDDKSYPFIFLSGDTHPRLAMHRGAKHAKGEYFGPFPNGYAVRETLALLQKIFPIRQCENSVYRNRSRPCLQYQIGRCLGPCVEGLVSEEEYAQQVEYVRLFLSGKDDQVLTQLISRMETASQNLEFEEAARIRDQIQAVRRVTEKQFVSNTGDDLDVIGVAFDAGMACVHVLFIRQGKVLGSRSYFPKVPGGTELSEVVETFVGQFYLQGSQMRTLPGEILLDFNLSDKTLLADSLSELAGRKINVQTKPRGDRARYLKLARTNAATALTSKLSQQSTVHQRLTALASVLKLPEVKRMECFDISHTMGEQTVASCVVFDANGPLRAEYRRYNITGITPGDDYAAMNQVLRRRYGKAIDDSKIPDVILIDGGKGQLAQAKNVFAELDVSWDKNHPLLLGVAKGADRKAGLETLFFEPEGEGFSLPPDSPALHVIQHIRDESHDHAIGGHRKKRAKVKNTSSLETIEGVGPKRRQMLLKYMGGLQGLRNASVEEIAKVPGISQGLAEKIFWSLKH</sequence>
<name>UVRC_ECO5E</name>
<accession>B5YRT7</accession>
<keyword id="KW-0963">Cytoplasm</keyword>
<keyword id="KW-0227">DNA damage</keyword>
<keyword id="KW-0228">DNA excision</keyword>
<keyword id="KW-0234">DNA repair</keyword>
<keyword id="KW-0267">Excision nuclease</keyword>
<keyword id="KW-0742">SOS response</keyword>
<protein>
    <recommendedName>
        <fullName evidence="1">UvrABC system protein C</fullName>
        <shortName evidence="1">Protein UvrC</shortName>
    </recommendedName>
    <alternativeName>
        <fullName evidence="1">Excinuclease ABC subunit C</fullName>
    </alternativeName>
</protein>
<gene>
    <name evidence="1" type="primary">uvrC</name>
    <name type="ordered locus">ECH74115_2685</name>
</gene>